<proteinExistence type="inferred from homology"/>
<comment type="function">
    <text evidence="1">An essential GTPase which binds GTP, GDP and possibly (p)ppGpp with moderate affinity, with high nucleotide exchange rates and a fairly low GTP hydrolysis rate. Plays a role in control of the cell cycle, stress response, ribosome biogenesis and in those bacteria that undergo differentiation, in morphogenesis control.</text>
</comment>
<comment type="cofactor">
    <cofactor evidence="1">
        <name>Mg(2+)</name>
        <dbReference type="ChEBI" id="CHEBI:18420"/>
    </cofactor>
</comment>
<comment type="subunit">
    <text evidence="1">Monomer.</text>
</comment>
<comment type="subcellular location">
    <subcellularLocation>
        <location evidence="1">Cytoplasm</location>
    </subcellularLocation>
</comment>
<comment type="similarity">
    <text evidence="1">Belongs to the TRAFAC class OBG-HflX-like GTPase superfamily. OBG GTPase family.</text>
</comment>
<feature type="chain" id="PRO_0000385752" description="GTPase Obg">
    <location>
        <begin position="1"/>
        <end position="378"/>
    </location>
</feature>
<feature type="domain" description="Obg" evidence="2">
    <location>
        <begin position="1"/>
        <end position="159"/>
    </location>
</feature>
<feature type="domain" description="OBG-type G" evidence="1">
    <location>
        <begin position="160"/>
        <end position="336"/>
    </location>
</feature>
<feature type="region of interest" description="Disordered" evidence="3">
    <location>
        <begin position="345"/>
        <end position="378"/>
    </location>
</feature>
<feature type="binding site" evidence="1">
    <location>
        <begin position="166"/>
        <end position="173"/>
    </location>
    <ligand>
        <name>GTP</name>
        <dbReference type="ChEBI" id="CHEBI:37565"/>
    </ligand>
</feature>
<feature type="binding site" evidence="1">
    <location>
        <position position="173"/>
    </location>
    <ligand>
        <name>Mg(2+)</name>
        <dbReference type="ChEBI" id="CHEBI:18420"/>
    </ligand>
</feature>
<feature type="binding site" evidence="1">
    <location>
        <begin position="191"/>
        <end position="195"/>
    </location>
    <ligand>
        <name>GTP</name>
        <dbReference type="ChEBI" id="CHEBI:37565"/>
    </ligand>
</feature>
<feature type="binding site" evidence="1">
    <location>
        <position position="193"/>
    </location>
    <ligand>
        <name>Mg(2+)</name>
        <dbReference type="ChEBI" id="CHEBI:18420"/>
    </ligand>
</feature>
<feature type="binding site" evidence="1">
    <location>
        <begin position="213"/>
        <end position="216"/>
    </location>
    <ligand>
        <name>GTP</name>
        <dbReference type="ChEBI" id="CHEBI:37565"/>
    </ligand>
</feature>
<feature type="binding site" evidence="1">
    <location>
        <begin position="288"/>
        <end position="291"/>
    </location>
    <ligand>
        <name>GTP</name>
        <dbReference type="ChEBI" id="CHEBI:37565"/>
    </ligand>
</feature>
<feature type="binding site" evidence="1">
    <location>
        <begin position="317"/>
        <end position="319"/>
    </location>
    <ligand>
        <name>GTP</name>
        <dbReference type="ChEBI" id="CHEBI:37565"/>
    </ligand>
</feature>
<sequence>MKFVDEATIEVIAGKGGNGVASFRREKFIPKGGPDGGDGGRGGSIYAVADRNINTLIDFRYARLHRAKNGENGRGSDQYGAAAPDITLRVPVGTVVHDADTGELLFDLNRHGEKVTLAAGGQGGMGNLHFKSSTNRAPRQWTPGKEGEQRRLRLELKVLADVGLLGLPNAGKSTLISRISNARPKVADYPFTTLHPNLGVVRTSASRSFVVADIPGLIEGASEGAGLGHLFLRHLARTRVLLHLVDISSPDPDTDPIEQAVADARAIVEELRRYDPELADKPRWLVLNKLDMVADPDAARQRFVEQFSWQGPVFVISGLNGDGTQELIWALQDYLDAEQRKANLAQDQADGTYVAEDPRFDATRSDAAPPGAPRGGDE</sequence>
<keyword id="KW-0963">Cytoplasm</keyword>
<keyword id="KW-0342">GTP-binding</keyword>
<keyword id="KW-0378">Hydrolase</keyword>
<keyword id="KW-0460">Magnesium</keyword>
<keyword id="KW-0479">Metal-binding</keyword>
<keyword id="KW-0547">Nucleotide-binding</keyword>
<dbReference type="EC" id="3.6.5.-" evidence="1"/>
<dbReference type="EMBL" id="AM902716">
    <property type="protein sequence ID" value="CAP45030.1"/>
    <property type="molecule type" value="Genomic_DNA"/>
</dbReference>
<dbReference type="SMR" id="A9IFF9"/>
<dbReference type="STRING" id="94624.Bpet4679"/>
<dbReference type="KEGG" id="bpt:Bpet4679"/>
<dbReference type="eggNOG" id="COG0536">
    <property type="taxonomic scope" value="Bacteria"/>
</dbReference>
<dbReference type="Proteomes" id="UP000001225">
    <property type="component" value="Chromosome"/>
</dbReference>
<dbReference type="GO" id="GO:0005737">
    <property type="term" value="C:cytoplasm"/>
    <property type="evidence" value="ECO:0007669"/>
    <property type="project" value="UniProtKB-SubCell"/>
</dbReference>
<dbReference type="GO" id="GO:0005525">
    <property type="term" value="F:GTP binding"/>
    <property type="evidence" value="ECO:0007669"/>
    <property type="project" value="UniProtKB-UniRule"/>
</dbReference>
<dbReference type="GO" id="GO:0003924">
    <property type="term" value="F:GTPase activity"/>
    <property type="evidence" value="ECO:0007669"/>
    <property type="project" value="UniProtKB-UniRule"/>
</dbReference>
<dbReference type="GO" id="GO:0000287">
    <property type="term" value="F:magnesium ion binding"/>
    <property type="evidence" value="ECO:0007669"/>
    <property type="project" value="InterPro"/>
</dbReference>
<dbReference type="GO" id="GO:0042254">
    <property type="term" value="P:ribosome biogenesis"/>
    <property type="evidence" value="ECO:0007669"/>
    <property type="project" value="UniProtKB-UniRule"/>
</dbReference>
<dbReference type="CDD" id="cd01898">
    <property type="entry name" value="Obg"/>
    <property type="match status" value="1"/>
</dbReference>
<dbReference type="FunFam" id="2.70.210.12:FF:000001">
    <property type="entry name" value="GTPase Obg"/>
    <property type="match status" value="1"/>
</dbReference>
<dbReference type="Gene3D" id="2.70.210.12">
    <property type="entry name" value="GTP1/OBG domain"/>
    <property type="match status" value="1"/>
</dbReference>
<dbReference type="Gene3D" id="3.40.50.300">
    <property type="entry name" value="P-loop containing nucleotide triphosphate hydrolases"/>
    <property type="match status" value="1"/>
</dbReference>
<dbReference type="HAMAP" id="MF_01454">
    <property type="entry name" value="GTPase_Obg"/>
    <property type="match status" value="1"/>
</dbReference>
<dbReference type="InterPro" id="IPR031167">
    <property type="entry name" value="G_OBG"/>
</dbReference>
<dbReference type="InterPro" id="IPR006073">
    <property type="entry name" value="GTP-bd"/>
</dbReference>
<dbReference type="InterPro" id="IPR014100">
    <property type="entry name" value="GTP-bd_Obg/CgtA"/>
</dbReference>
<dbReference type="InterPro" id="IPR006074">
    <property type="entry name" value="GTP1-OBG_CS"/>
</dbReference>
<dbReference type="InterPro" id="IPR006169">
    <property type="entry name" value="GTP1_OBG_dom"/>
</dbReference>
<dbReference type="InterPro" id="IPR036726">
    <property type="entry name" value="GTP1_OBG_dom_sf"/>
</dbReference>
<dbReference type="InterPro" id="IPR045086">
    <property type="entry name" value="OBG_GTPase"/>
</dbReference>
<dbReference type="InterPro" id="IPR027417">
    <property type="entry name" value="P-loop_NTPase"/>
</dbReference>
<dbReference type="NCBIfam" id="TIGR02729">
    <property type="entry name" value="Obg_CgtA"/>
    <property type="match status" value="1"/>
</dbReference>
<dbReference type="NCBIfam" id="NF008955">
    <property type="entry name" value="PRK12297.1"/>
    <property type="match status" value="1"/>
</dbReference>
<dbReference type="NCBIfam" id="NF008956">
    <property type="entry name" value="PRK12299.1"/>
    <property type="match status" value="1"/>
</dbReference>
<dbReference type="PANTHER" id="PTHR11702">
    <property type="entry name" value="DEVELOPMENTALLY REGULATED GTP-BINDING PROTEIN-RELATED"/>
    <property type="match status" value="1"/>
</dbReference>
<dbReference type="PANTHER" id="PTHR11702:SF31">
    <property type="entry name" value="MITOCHONDRIAL RIBOSOME-ASSOCIATED GTPASE 2"/>
    <property type="match status" value="1"/>
</dbReference>
<dbReference type="Pfam" id="PF01018">
    <property type="entry name" value="GTP1_OBG"/>
    <property type="match status" value="1"/>
</dbReference>
<dbReference type="Pfam" id="PF01926">
    <property type="entry name" value="MMR_HSR1"/>
    <property type="match status" value="1"/>
</dbReference>
<dbReference type="PIRSF" id="PIRSF002401">
    <property type="entry name" value="GTP_bd_Obg/CgtA"/>
    <property type="match status" value="1"/>
</dbReference>
<dbReference type="PRINTS" id="PR00326">
    <property type="entry name" value="GTP1OBG"/>
</dbReference>
<dbReference type="SUPFAM" id="SSF82051">
    <property type="entry name" value="Obg GTP-binding protein N-terminal domain"/>
    <property type="match status" value="1"/>
</dbReference>
<dbReference type="SUPFAM" id="SSF52540">
    <property type="entry name" value="P-loop containing nucleoside triphosphate hydrolases"/>
    <property type="match status" value="1"/>
</dbReference>
<dbReference type="PROSITE" id="PS51710">
    <property type="entry name" value="G_OBG"/>
    <property type="match status" value="1"/>
</dbReference>
<dbReference type="PROSITE" id="PS00905">
    <property type="entry name" value="GTP1_OBG"/>
    <property type="match status" value="1"/>
</dbReference>
<dbReference type="PROSITE" id="PS51883">
    <property type="entry name" value="OBG"/>
    <property type="match status" value="1"/>
</dbReference>
<organism>
    <name type="scientific">Bordetella petrii (strain ATCC BAA-461 / DSM 12804 / CCUG 43448)</name>
    <dbReference type="NCBI Taxonomy" id="340100"/>
    <lineage>
        <taxon>Bacteria</taxon>
        <taxon>Pseudomonadati</taxon>
        <taxon>Pseudomonadota</taxon>
        <taxon>Betaproteobacteria</taxon>
        <taxon>Burkholderiales</taxon>
        <taxon>Alcaligenaceae</taxon>
        <taxon>Bordetella</taxon>
    </lineage>
</organism>
<accession>A9IFF9</accession>
<evidence type="ECO:0000255" key="1">
    <source>
        <dbReference type="HAMAP-Rule" id="MF_01454"/>
    </source>
</evidence>
<evidence type="ECO:0000255" key="2">
    <source>
        <dbReference type="PROSITE-ProRule" id="PRU01231"/>
    </source>
</evidence>
<evidence type="ECO:0000256" key="3">
    <source>
        <dbReference type="SAM" id="MobiDB-lite"/>
    </source>
</evidence>
<protein>
    <recommendedName>
        <fullName evidence="1">GTPase Obg</fullName>
        <ecNumber evidence="1">3.6.5.-</ecNumber>
    </recommendedName>
    <alternativeName>
        <fullName evidence="1">GTP-binding protein Obg</fullName>
    </alternativeName>
</protein>
<gene>
    <name evidence="1" type="primary">obg</name>
    <name type="ordered locus">Bpet4679</name>
</gene>
<reference key="1">
    <citation type="journal article" date="2008" name="BMC Genomics">
        <title>The missing link: Bordetella petrii is endowed with both the metabolic versatility of environmental bacteria and virulence traits of pathogenic Bordetellae.</title>
        <authorList>
            <person name="Gross R."/>
            <person name="Guzman C.A."/>
            <person name="Sebaihia M."/>
            <person name="Martin dos Santos V.A.P."/>
            <person name="Pieper D.H."/>
            <person name="Koebnik R."/>
            <person name="Lechner M."/>
            <person name="Bartels D."/>
            <person name="Buhrmester J."/>
            <person name="Choudhuri J.V."/>
            <person name="Ebensen T."/>
            <person name="Gaigalat L."/>
            <person name="Herrmann S."/>
            <person name="Khachane A.N."/>
            <person name="Larisch C."/>
            <person name="Link S."/>
            <person name="Linke B."/>
            <person name="Meyer F."/>
            <person name="Mormann S."/>
            <person name="Nakunst D."/>
            <person name="Rueckert C."/>
            <person name="Schneiker-Bekel S."/>
            <person name="Schulze K."/>
            <person name="Voerholter F.-J."/>
            <person name="Yevsa T."/>
            <person name="Engle J.T."/>
            <person name="Goldman W.E."/>
            <person name="Puehler A."/>
            <person name="Goebel U.B."/>
            <person name="Goesmann A."/>
            <person name="Bloecker H."/>
            <person name="Kaiser O."/>
            <person name="Martinez-Arias R."/>
        </authorList>
    </citation>
    <scope>NUCLEOTIDE SEQUENCE [LARGE SCALE GENOMIC DNA]</scope>
    <source>
        <strain>ATCC BAA-461 / DSM 12804 / CCUG 43448</strain>
    </source>
</reference>
<name>OBG_BORPD</name>